<comment type="miscellaneous">
    <text>This chain was isolated from an IgA myeloma protein that binds galactan.</text>
</comment>
<proteinExistence type="evidence at protein level"/>
<sequence length="119" mass="13169">EVKLLESGGGLVQPGGSLKLSCAASGFDFSRYWMSWVRQAPGKGLEWIGEINPDSSTINYTPSLKDKFIISRDNAKNTLYLQMSKVRSEDTALYYCARLGYYGYFDVWGAGTTVTVSSE</sequence>
<evidence type="ECO:0007829" key="1">
    <source>
        <dbReference type="PDB" id="1OTS"/>
    </source>
</evidence>
<evidence type="ECO:0007829" key="2">
    <source>
        <dbReference type="PDB" id="3U0W"/>
    </source>
</evidence>
<evidence type="ECO:0007829" key="3">
    <source>
        <dbReference type="PDB" id="4KKB"/>
    </source>
</evidence>
<keyword id="KW-0002">3D-structure</keyword>
<keyword id="KW-1064">Adaptive immunity</keyword>
<keyword id="KW-0903">Direct protein sequencing</keyword>
<keyword id="KW-0391">Immunity</keyword>
<keyword id="KW-1280">Immunoglobulin</keyword>
<keyword id="KW-1185">Reference proteome</keyword>
<name>HVM38_MOUSE</name>
<reference key="1">
    <citation type="journal article" date="1979" name="Proc. Natl. Acad. Sci. U.S.A.">
        <title>Structural evidence for independent joining region gene in immunoglobulin heavy chains from anti-galactan myeloma proteins and its potential role in generating diversity in complementarity-determining regions.</title>
        <authorList>
            <person name="Rao D.N."/>
            <person name="Rudikoff S."/>
            <person name="Krutzsch H."/>
            <person name="Potter M."/>
        </authorList>
    </citation>
    <scope>PROTEIN SEQUENCE</scope>
</reference>
<feature type="chain" id="PRO_0000059891" description="Ig heavy chain V region T601">
    <location>
        <begin position="1"/>
        <end position="119" status="greater than"/>
    </location>
</feature>
<feature type="domain" description="Ig-like">
    <location>
        <begin position="1"/>
        <end position="112"/>
    </location>
</feature>
<feature type="non-terminal residue">
    <location>
        <position position="119"/>
    </location>
</feature>
<feature type="strand" evidence="2">
    <location>
        <begin position="3"/>
        <end position="7"/>
    </location>
</feature>
<feature type="strand" evidence="1">
    <location>
        <begin position="10"/>
        <end position="12"/>
    </location>
</feature>
<feature type="strand" evidence="2">
    <location>
        <begin position="18"/>
        <end position="27"/>
    </location>
</feature>
<feature type="helix" evidence="2">
    <location>
        <begin position="29"/>
        <end position="31"/>
    </location>
</feature>
<feature type="strand" evidence="2">
    <location>
        <begin position="34"/>
        <end position="39"/>
    </location>
</feature>
<feature type="strand" evidence="2">
    <location>
        <begin position="45"/>
        <end position="51"/>
    </location>
</feature>
<feature type="strand" evidence="2">
    <location>
        <begin position="58"/>
        <end position="60"/>
    </location>
</feature>
<feature type="helix" evidence="2">
    <location>
        <begin position="62"/>
        <end position="64"/>
    </location>
</feature>
<feature type="turn" evidence="2">
    <location>
        <begin position="65"/>
        <end position="67"/>
    </location>
</feature>
<feature type="strand" evidence="2">
    <location>
        <begin position="68"/>
        <end position="73"/>
    </location>
</feature>
<feature type="helix" evidence="2">
    <location>
        <begin position="74"/>
        <end position="76"/>
    </location>
</feature>
<feature type="strand" evidence="2">
    <location>
        <begin position="78"/>
        <end position="83"/>
    </location>
</feature>
<feature type="helix" evidence="2">
    <location>
        <begin position="88"/>
        <end position="90"/>
    </location>
</feature>
<feature type="strand" evidence="2">
    <location>
        <begin position="92"/>
        <end position="98"/>
    </location>
</feature>
<feature type="turn" evidence="2">
    <location>
        <begin position="101"/>
        <end position="103"/>
    </location>
</feature>
<feature type="strand" evidence="3">
    <location>
        <begin position="105"/>
        <end position="108"/>
    </location>
</feature>
<feature type="strand" evidence="2">
    <location>
        <begin position="112"/>
        <end position="116"/>
    </location>
</feature>
<protein>
    <recommendedName>
        <fullName>Ig heavy chain V region T601</fullName>
    </recommendedName>
</protein>
<accession>P01808</accession>
<organism>
    <name type="scientific">Mus musculus</name>
    <name type="common">Mouse</name>
    <dbReference type="NCBI Taxonomy" id="10090"/>
    <lineage>
        <taxon>Eukaryota</taxon>
        <taxon>Metazoa</taxon>
        <taxon>Chordata</taxon>
        <taxon>Craniata</taxon>
        <taxon>Vertebrata</taxon>
        <taxon>Euteleostomi</taxon>
        <taxon>Mammalia</taxon>
        <taxon>Eutheria</taxon>
        <taxon>Euarchontoglires</taxon>
        <taxon>Glires</taxon>
        <taxon>Rodentia</taxon>
        <taxon>Myomorpha</taxon>
        <taxon>Muroidea</taxon>
        <taxon>Muridae</taxon>
        <taxon>Murinae</taxon>
        <taxon>Mus</taxon>
        <taxon>Mus</taxon>
    </lineage>
</organism>
<dbReference type="PIR" id="A02078">
    <property type="entry name" value="AVMST6"/>
</dbReference>
<dbReference type="PDB" id="1OTS">
    <property type="method" value="X-ray"/>
    <property type="resolution" value="2.51 A"/>
    <property type="chains" value="C/E=1-118"/>
</dbReference>
<dbReference type="PDB" id="1OTT">
    <property type="method" value="X-ray"/>
    <property type="resolution" value="3.00 A"/>
    <property type="chains" value="C/E=1-118"/>
</dbReference>
<dbReference type="PDB" id="1OTU">
    <property type="method" value="X-ray"/>
    <property type="resolution" value="3.30 A"/>
    <property type="chains" value="C/E=1-118"/>
</dbReference>
<dbReference type="PDB" id="2EXW">
    <property type="method" value="X-ray"/>
    <property type="resolution" value="3.20 A"/>
    <property type="chains" value="C/E=1-118"/>
</dbReference>
<dbReference type="PDB" id="2EXY">
    <property type="method" value="X-ray"/>
    <property type="resolution" value="3.10 A"/>
    <property type="chains" value="C/E=1-118"/>
</dbReference>
<dbReference type="PDB" id="2EZ0">
    <property type="method" value="X-ray"/>
    <property type="resolution" value="3.54 A"/>
    <property type="chains" value="C/E=1-118"/>
</dbReference>
<dbReference type="PDB" id="2H2P">
    <property type="method" value="X-ray"/>
    <property type="resolution" value="3.10 A"/>
    <property type="chains" value="C/E=2-118"/>
</dbReference>
<dbReference type="PDB" id="2H2S">
    <property type="method" value="X-ray"/>
    <property type="resolution" value="3.10 A"/>
    <property type="chains" value="C/E=2-118"/>
</dbReference>
<dbReference type="PDB" id="2HLF">
    <property type="method" value="X-ray"/>
    <property type="resolution" value="3.30 A"/>
    <property type="chains" value="C/E=2-118"/>
</dbReference>
<dbReference type="PDB" id="2HT2">
    <property type="method" value="X-ray"/>
    <property type="resolution" value="3.32 A"/>
    <property type="chains" value="C/E=2-118"/>
</dbReference>
<dbReference type="PDB" id="2HT3">
    <property type="method" value="X-ray"/>
    <property type="resolution" value="3.30 A"/>
    <property type="chains" value="C/E=2-118"/>
</dbReference>
<dbReference type="PDB" id="2HT4">
    <property type="method" value="X-ray"/>
    <property type="resolution" value="3.20 A"/>
    <property type="chains" value="C/E=2-118"/>
</dbReference>
<dbReference type="PDB" id="2HTK">
    <property type="method" value="X-ray"/>
    <property type="resolution" value="3.41 A"/>
    <property type="chains" value="C/E=2-118"/>
</dbReference>
<dbReference type="PDB" id="2HTL">
    <property type="method" value="X-ray"/>
    <property type="resolution" value="3.40 A"/>
    <property type="chains" value="C/E=2-118"/>
</dbReference>
<dbReference type="PDB" id="3DET">
    <property type="method" value="X-ray"/>
    <property type="resolution" value="2.80 A"/>
    <property type="chains" value="C/E=2-118"/>
</dbReference>
<dbReference type="PDB" id="3EJY">
    <property type="method" value="X-ray"/>
    <property type="resolution" value="3.20 A"/>
    <property type="chains" value="C/E=2-118"/>
</dbReference>
<dbReference type="PDB" id="3EJZ">
    <property type="method" value="X-ray"/>
    <property type="resolution" value="2.90 A"/>
    <property type="chains" value="C/E=2-118"/>
</dbReference>
<dbReference type="PDB" id="3U0W">
    <property type="method" value="X-ray"/>
    <property type="resolution" value="2.00 A"/>
    <property type="chains" value="H=1-98"/>
</dbReference>
<dbReference type="PDB" id="4KKB">
    <property type="method" value="X-ray"/>
    <property type="resolution" value="3.02 A"/>
    <property type="chains" value="C/E=1-118"/>
</dbReference>
<dbReference type="PDB" id="4MQX">
    <property type="method" value="X-ray"/>
    <property type="resolution" value="3.52 A"/>
    <property type="chains" value="C/E=1-118"/>
</dbReference>
<dbReference type="PDBsum" id="1OTS"/>
<dbReference type="PDBsum" id="1OTT"/>
<dbReference type="PDBsum" id="1OTU"/>
<dbReference type="PDBsum" id="2EXW"/>
<dbReference type="PDBsum" id="2EXY"/>
<dbReference type="PDBsum" id="2EZ0"/>
<dbReference type="PDBsum" id="2H2P"/>
<dbReference type="PDBsum" id="2H2S"/>
<dbReference type="PDBsum" id="2HLF"/>
<dbReference type="PDBsum" id="2HT2"/>
<dbReference type="PDBsum" id="2HT3"/>
<dbReference type="PDBsum" id="2HT4"/>
<dbReference type="PDBsum" id="2HTK"/>
<dbReference type="PDBsum" id="2HTL"/>
<dbReference type="PDBsum" id="3DET"/>
<dbReference type="PDBsum" id="3EJY"/>
<dbReference type="PDBsum" id="3EJZ"/>
<dbReference type="PDBsum" id="3U0W"/>
<dbReference type="PDBsum" id="4KKB"/>
<dbReference type="PDBsum" id="4MQX"/>
<dbReference type="SMR" id="P01808"/>
<dbReference type="FunCoup" id="P01808">
    <property type="interactions" value="533"/>
</dbReference>
<dbReference type="jPOST" id="P01808"/>
<dbReference type="MGI" id="MGI:96461">
    <property type="gene designation" value="Igh-J"/>
</dbReference>
<dbReference type="InParanoid" id="P01808"/>
<dbReference type="EvolutionaryTrace" id="P01808"/>
<dbReference type="PRO" id="PR:P01808"/>
<dbReference type="Proteomes" id="UP000000589">
    <property type="component" value="Unplaced"/>
</dbReference>
<dbReference type="RNAct" id="P01808">
    <property type="molecule type" value="protein"/>
</dbReference>
<dbReference type="GO" id="GO:0005576">
    <property type="term" value="C:extracellular region"/>
    <property type="evidence" value="ECO:0007669"/>
    <property type="project" value="UniProtKB-ARBA"/>
</dbReference>
<dbReference type="GO" id="GO:0019814">
    <property type="term" value="C:immunoglobulin complex"/>
    <property type="evidence" value="ECO:0007669"/>
    <property type="project" value="UniProtKB-KW"/>
</dbReference>
<dbReference type="GO" id="GO:0002250">
    <property type="term" value="P:adaptive immune response"/>
    <property type="evidence" value="ECO:0007669"/>
    <property type="project" value="UniProtKB-KW"/>
</dbReference>
<dbReference type="CDD" id="cd04981">
    <property type="entry name" value="IgV_H"/>
    <property type="match status" value="1"/>
</dbReference>
<dbReference type="FunFam" id="2.60.40.10:FF:001259">
    <property type="entry name" value="Immunoglobulin heavy variable 13-2"/>
    <property type="match status" value="1"/>
</dbReference>
<dbReference type="Gene3D" id="2.60.40.10">
    <property type="entry name" value="Immunoglobulins"/>
    <property type="match status" value="1"/>
</dbReference>
<dbReference type="InterPro" id="IPR007110">
    <property type="entry name" value="Ig-like_dom"/>
</dbReference>
<dbReference type="InterPro" id="IPR036179">
    <property type="entry name" value="Ig-like_dom_sf"/>
</dbReference>
<dbReference type="InterPro" id="IPR013783">
    <property type="entry name" value="Ig-like_fold"/>
</dbReference>
<dbReference type="InterPro" id="IPR003599">
    <property type="entry name" value="Ig_sub"/>
</dbReference>
<dbReference type="InterPro" id="IPR013106">
    <property type="entry name" value="Ig_V-set"/>
</dbReference>
<dbReference type="InterPro" id="IPR050199">
    <property type="entry name" value="IgHV"/>
</dbReference>
<dbReference type="PANTHER" id="PTHR23266">
    <property type="entry name" value="IMMUNOGLOBULIN HEAVY CHAIN"/>
    <property type="match status" value="1"/>
</dbReference>
<dbReference type="Pfam" id="PF07686">
    <property type="entry name" value="V-set"/>
    <property type="match status" value="1"/>
</dbReference>
<dbReference type="SMART" id="SM00409">
    <property type="entry name" value="IG"/>
    <property type="match status" value="1"/>
</dbReference>
<dbReference type="SMART" id="SM00406">
    <property type="entry name" value="IGv"/>
    <property type="match status" value="1"/>
</dbReference>
<dbReference type="SUPFAM" id="SSF48726">
    <property type="entry name" value="Immunoglobulin"/>
    <property type="match status" value="1"/>
</dbReference>
<dbReference type="PROSITE" id="PS50835">
    <property type="entry name" value="IG_LIKE"/>
    <property type="match status" value="1"/>
</dbReference>